<comment type="function">
    <text evidence="1">Cell wall formation.</text>
</comment>
<comment type="catalytic activity">
    <reaction evidence="1">
        <text>UDP-N-acetyl-alpha-D-muramate + L-alanine + ATP = UDP-N-acetyl-alpha-D-muramoyl-L-alanine + ADP + phosphate + H(+)</text>
        <dbReference type="Rhea" id="RHEA:23372"/>
        <dbReference type="ChEBI" id="CHEBI:15378"/>
        <dbReference type="ChEBI" id="CHEBI:30616"/>
        <dbReference type="ChEBI" id="CHEBI:43474"/>
        <dbReference type="ChEBI" id="CHEBI:57972"/>
        <dbReference type="ChEBI" id="CHEBI:70757"/>
        <dbReference type="ChEBI" id="CHEBI:83898"/>
        <dbReference type="ChEBI" id="CHEBI:456216"/>
        <dbReference type="EC" id="6.3.2.8"/>
    </reaction>
</comment>
<comment type="pathway">
    <text evidence="1">Cell wall biogenesis; peptidoglycan biosynthesis.</text>
</comment>
<comment type="subcellular location">
    <subcellularLocation>
        <location evidence="1">Cytoplasm</location>
    </subcellularLocation>
</comment>
<comment type="similarity">
    <text evidence="1">Belongs to the MurCDEF family.</text>
</comment>
<name>MURC_CUTAK</name>
<feature type="chain" id="PRO_0000182130" description="UDP-N-acetylmuramate--L-alanine ligase">
    <location>
        <begin position="1"/>
        <end position="471"/>
    </location>
</feature>
<feature type="binding site" evidence="1">
    <location>
        <begin position="122"/>
        <end position="128"/>
    </location>
    <ligand>
        <name>ATP</name>
        <dbReference type="ChEBI" id="CHEBI:30616"/>
    </ligand>
</feature>
<reference key="1">
    <citation type="journal article" date="2004" name="Science">
        <title>The complete genome sequence of Propionibacterium acnes, a commensal of human skin.</title>
        <authorList>
            <person name="Brueggemann H."/>
            <person name="Henne A."/>
            <person name="Hoster F."/>
            <person name="Liesegang H."/>
            <person name="Wiezer A."/>
            <person name="Strittmatter A."/>
            <person name="Hujer S."/>
            <person name="Duerre P."/>
            <person name="Gottschalk G."/>
        </authorList>
    </citation>
    <scope>NUCLEOTIDE SEQUENCE [LARGE SCALE GENOMIC DNA]</scope>
    <source>
        <strain>DSM 16379 / KPA171202</strain>
    </source>
</reference>
<evidence type="ECO:0000255" key="1">
    <source>
        <dbReference type="HAMAP-Rule" id="MF_00046"/>
    </source>
</evidence>
<protein>
    <recommendedName>
        <fullName evidence="1">UDP-N-acetylmuramate--L-alanine ligase</fullName>
        <ecNumber evidence="1">6.3.2.8</ecNumber>
    </recommendedName>
    <alternativeName>
        <fullName evidence="1">UDP-N-acetylmuramoyl-L-alanine synthetase</fullName>
    </alternativeName>
</protein>
<gene>
    <name evidence="1" type="primary">murC</name>
    <name type="ordered locus">PPA0759</name>
</gene>
<keyword id="KW-0067">ATP-binding</keyword>
<keyword id="KW-0131">Cell cycle</keyword>
<keyword id="KW-0132">Cell division</keyword>
<keyword id="KW-0133">Cell shape</keyword>
<keyword id="KW-0961">Cell wall biogenesis/degradation</keyword>
<keyword id="KW-0963">Cytoplasm</keyword>
<keyword id="KW-0436">Ligase</keyword>
<keyword id="KW-0547">Nucleotide-binding</keyword>
<keyword id="KW-0573">Peptidoglycan synthesis</keyword>
<sequence>MSLREPVELLDPSAVGPVYFIAIGGAGMSGVARIYHDLGVEVRGSDQVDSANLRDLASLGVQTWVGHDPSHLAGARTVVVSSAIRPDNPELVEAHRLGLRIWHRSAALAALMLGREGVSIAGTHGKTTTTGMVATMLDCAGADPSYVIGSPLAATGMSSHLGGGEAFVVEADESDGSFLQYPSQIVVVTNVEADHLDNWGTPQAYFDGFVSMATRPEVRYVVTNADDPGAAELACRLESTGTVRVVTYGESEQAEVRLVDLDLNGTTASATLVYGPTQGRLELQVPGRYNLSNAAAAYCVGSLLGISHQDLLTGIASFTGTLRRFQLVGRVADVSVFDDYAHHPTELRATLGAARRVVTGQGRVIACFQPHLFSRTRDFAGEFGSALTLADRVIVSDIYPAREDPIPGVTGELVHDAVIAAGGDSRYVPDKQDLPEALAEEVRPGDLVITLGAGDVTLVGPVLVGLLEGKA</sequence>
<organism>
    <name type="scientific">Cutibacterium acnes (strain DSM 16379 / KPA171202)</name>
    <name type="common">Propionibacterium acnes</name>
    <dbReference type="NCBI Taxonomy" id="267747"/>
    <lineage>
        <taxon>Bacteria</taxon>
        <taxon>Bacillati</taxon>
        <taxon>Actinomycetota</taxon>
        <taxon>Actinomycetes</taxon>
        <taxon>Propionibacteriales</taxon>
        <taxon>Propionibacteriaceae</taxon>
        <taxon>Cutibacterium</taxon>
    </lineage>
</organism>
<proteinExistence type="inferred from homology"/>
<accession>Q6A9Q1</accession>
<dbReference type="EC" id="6.3.2.8" evidence="1"/>
<dbReference type="EMBL" id="AE017283">
    <property type="protein sequence ID" value="AAT82515.1"/>
    <property type="molecule type" value="Genomic_DNA"/>
</dbReference>
<dbReference type="RefSeq" id="WP_009640145.1">
    <property type="nucleotide sequence ID" value="NZ_CP025935.1"/>
</dbReference>
<dbReference type="SMR" id="Q6A9Q1"/>
<dbReference type="EnsemblBacteria" id="AAT82515">
    <property type="protein sequence ID" value="AAT82515"/>
    <property type="gene ID" value="PPA0759"/>
</dbReference>
<dbReference type="KEGG" id="pac:PPA0759"/>
<dbReference type="PATRIC" id="fig|267747.3.peg.796"/>
<dbReference type="eggNOG" id="COG0773">
    <property type="taxonomic scope" value="Bacteria"/>
</dbReference>
<dbReference type="HOGENOM" id="CLU_028104_2_2_11"/>
<dbReference type="UniPathway" id="UPA00219"/>
<dbReference type="Proteomes" id="UP000000603">
    <property type="component" value="Chromosome"/>
</dbReference>
<dbReference type="GO" id="GO:0005737">
    <property type="term" value="C:cytoplasm"/>
    <property type="evidence" value="ECO:0007669"/>
    <property type="project" value="UniProtKB-SubCell"/>
</dbReference>
<dbReference type="GO" id="GO:0005524">
    <property type="term" value="F:ATP binding"/>
    <property type="evidence" value="ECO:0007669"/>
    <property type="project" value="UniProtKB-UniRule"/>
</dbReference>
<dbReference type="GO" id="GO:0008763">
    <property type="term" value="F:UDP-N-acetylmuramate-L-alanine ligase activity"/>
    <property type="evidence" value="ECO:0007669"/>
    <property type="project" value="UniProtKB-UniRule"/>
</dbReference>
<dbReference type="GO" id="GO:0051301">
    <property type="term" value="P:cell division"/>
    <property type="evidence" value="ECO:0007669"/>
    <property type="project" value="UniProtKB-KW"/>
</dbReference>
<dbReference type="GO" id="GO:0071555">
    <property type="term" value="P:cell wall organization"/>
    <property type="evidence" value="ECO:0007669"/>
    <property type="project" value="UniProtKB-KW"/>
</dbReference>
<dbReference type="GO" id="GO:0009252">
    <property type="term" value="P:peptidoglycan biosynthetic process"/>
    <property type="evidence" value="ECO:0007669"/>
    <property type="project" value="UniProtKB-UniRule"/>
</dbReference>
<dbReference type="GO" id="GO:0008360">
    <property type="term" value="P:regulation of cell shape"/>
    <property type="evidence" value="ECO:0007669"/>
    <property type="project" value="UniProtKB-KW"/>
</dbReference>
<dbReference type="Gene3D" id="3.90.190.20">
    <property type="entry name" value="Mur ligase, C-terminal domain"/>
    <property type="match status" value="1"/>
</dbReference>
<dbReference type="Gene3D" id="3.40.1190.10">
    <property type="entry name" value="Mur-like, catalytic domain"/>
    <property type="match status" value="1"/>
</dbReference>
<dbReference type="Gene3D" id="3.40.50.720">
    <property type="entry name" value="NAD(P)-binding Rossmann-like Domain"/>
    <property type="match status" value="1"/>
</dbReference>
<dbReference type="HAMAP" id="MF_00046">
    <property type="entry name" value="MurC"/>
    <property type="match status" value="1"/>
</dbReference>
<dbReference type="InterPro" id="IPR036565">
    <property type="entry name" value="Mur-like_cat_sf"/>
</dbReference>
<dbReference type="InterPro" id="IPR004101">
    <property type="entry name" value="Mur_ligase_C"/>
</dbReference>
<dbReference type="InterPro" id="IPR036615">
    <property type="entry name" value="Mur_ligase_C_dom_sf"/>
</dbReference>
<dbReference type="InterPro" id="IPR013221">
    <property type="entry name" value="Mur_ligase_cen"/>
</dbReference>
<dbReference type="InterPro" id="IPR000713">
    <property type="entry name" value="Mur_ligase_N"/>
</dbReference>
<dbReference type="InterPro" id="IPR050061">
    <property type="entry name" value="MurCDEF_pg_biosynth"/>
</dbReference>
<dbReference type="InterPro" id="IPR005758">
    <property type="entry name" value="UDP-N-AcMur_Ala_ligase_MurC"/>
</dbReference>
<dbReference type="NCBIfam" id="TIGR01082">
    <property type="entry name" value="murC"/>
    <property type="match status" value="1"/>
</dbReference>
<dbReference type="PANTHER" id="PTHR43445:SF3">
    <property type="entry name" value="UDP-N-ACETYLMURAMATE--L-ALANINE LIGASE"/>
    <property type="match status" value="1"/>
</dbReference>
<dbReference type="PANTHER" id="PTHR43445">
    <property type="entry name" value="UDP-N-ACETYLMURAMATE--L-ALANINE LIGASE-RELATED"/>
    <property type="match status" value="1"/>
</dbReference>
<dbReference type="Pfam" id="PF01225">
    <property type="entry name" value="Mur_ligase"/>
    <property type="match status" value="1"/>
</dbReference>
<dbReference type="Pfam" id="PF02875">
    <property type="entry name" value="Mur_ligase_C"/>
    <property type="match status" value="1"/>
</dbReference>
<dbReference type="Pfam" id="PF08245">
    <property type="entry name" value="Mur_ligase_M"/>
    <property type="match status" value="1"/>
</dbReference>
<dbReference type="SUPFAM" id="SSF51984">
    <property type="entry name" value="MurCD N-terminal domain"/>
    <property type="match status" value="1"/>
</dbReference>
<dbReference type="SUPFAM" id="SSF53623">
    <property type="entry name" value="MurD-like peptide ligases, catalytic domain"/>
    <property type="match status" value="1"/>
</dbReference>
<dbReference type="SUPFAM" id="SSF53244">
    <property type="entry name" value="MurD-like peptide ligases, peptide-binding domain"/>
    <property type="match status" value="1"/>
</dbReference>